<accession>Q4QKH0</accession>
<reference key="1">
    <citation type="journal article" date="2005" name="J. Bacteriol.">
        <title>Genomic sequence of an otitis media isolate of nontypeable Haemophilus influenzae: comparative study with H. influenzae serotype d, strain KW20.</title>
        <authorList>
            <person name="Harrison A."/>
            <person name="Dyer D.W."/>
            <person name="Gillaspy A."/>
            <person name="Ray W.C."/>
            <person name="Mungur R."/>
            <person name="Carson M.B."/>
            <person name="Zhong H."/>
            <person name="Gipson J."/>
            <person name="Gipson M."/>
            <person name="Johnson L.S."/>
            <person name="Lewis L."/>
            <person name="Bakaletz L.O."/>
            <person name="Munson R.S. Jr."/>
        </authorList>
    </citation>
    <scope>NUCLEOTIDE SEQUENCE [LARGE SCALE GENOMIC DNA]</scope>
    <source>
        <strain>86-028NP</strain>
    </source>
</reference>
<proteinExistence type="inferred from homology"/>
<protein>
    <recommendedName>
        <fullName evidence="1">Large ribosomal subunit protein uL13</fullName>
    </recommendedName>
    <alternativeName>
        <fullName evidence="2">50S ribosomal protein L13</fullName>
    </alternativeName>
</protein>
<keyword id="KW-0687">Ribonucleoprotein</keyword>
<keyword id="KW-0689">Ribosomal protein</keyword>
<sequence length="142" mass="15992">MKTFVAKPETVKRDWYVVDATGKTLGRLATELARRLRGKHKAEYTPHVDTGDYIIVINADKVAVTGRKETDKLYYWHTGYVGGIKQATFKEMIARRPEAVIEIAVKGMLPKGPLGRAMFRKLKVYAGAEHQHAAQQPQVLDI</sequence>
<organism>
    <name type="scientific">Haemophilus influenzae (strain 86-028NP)</name>
    <dbReference type="NCBI Taxonomy" id="281310"/>
    <lineage>
        <taxon>Bacteria</taxon>
        <taxon>Pseudomonadati</taxon>
        <taxon>Pseudomonadota</taxon>
        <taxon>Gammaproteobacteria</taxon>
        <taxon>Pasteurellales</taxon>
        <taxon>Pasteurellaceae</taxon>
        <taxon>Haemophilus</taxon>
    </lineage>
</organism>
<comment type="function">
    <text evidence="1">This protein is one of the early assembly proteins of the 50S ribosomal subunit, although it is not seen to bind rRNA by itself. It is important during the early stages of 50S assembly.</text>
</comment>
<comment type="subunit">
    <text evidence="1">Part of the 50S ribosomal subunit.</text>
</comment>
<comment type="similarity">
    <text evidence="1">Belongs to the universal ribosomal protein uL13 family.</text>
</comment>
<dbReference type="EMBL" id="CP000057">
    <property type="protein sequence ID" value="AAX88477.1"/>
    <property type="molecule type" value="Genomic_DNA"/>
</dbReference>
<dbReference type="RefSeq" id="WP_005628896.1">
    <property type="nucleotide sequence ID" value="NC_007146.2"/>
</dbReference>
<dbReference type="SMR" id="Q4QKH0"/>
<dbReference type="GeneID" id="93297717"/>
<dbReference type="KEGG" id="hit:NTHI1687"/>
<dbReference type="HOGENOM" id="CLU_082184_2_2_6"/>
<dbReference type="Proteomes" id="UP000002525">
    <property type="component" value="Chromosome"/>
</dbReference>
<dbReference type="GO" id="GO:0022625">
    <property type="term" value="C:cytosolic large ribosomal subunit"/>
    <property type="evidence" value="ECO:0007669"/>
    <property type="project" value="TreeGrafter"/>
</dbReference>
<dbReference type="GO" id="GO:0003729">
    <property type="term" value="F:mRNA binding"/>
    <property type="evidence" value="ECO:0007669"/>
    <property type="project" value="TreeGrafter"/>
</dbReference>
<dbReference type="GO" id="GO:0003735">
    <property type="term" value="F:structural constituent of ribosome"/>
    <property type="evidence" value="ECO:0007669"/>
    <property type="project" value="InterPro"/>
</dbReference>
<dbReference type="GO" id="GO:0017148">
    <property type="term" value="P:negative regulation of translation"/>
    <property type="evidence" value="ECO:0007669"/>
    <property type="project" value="TreeGrafter"/>
</dbReference>
<dbReference type="GO" id="GO:0006412">
    <property type="term" value="P:translation"/>
    <property type="evidence" value="ECO:0007669"/>
    <property type="project" value="UniProtKB-UniRule"/>
</dbReference>
<dbReference type="CDD" id="cd00392">
    <property type="entry name" value="Ribosomal_L13"/>
    <property type="match status" value="1"/>
</dbReference>
<dbReference type="FunFam" id="3.90.1180.10:FF:000001">
    <property type="entry name" value="50S ribosomal protein L13"/>
    <property type="match status" value="1"/>
</dbReference>
<dbReference type="Gene3D" id="3.90.1180.10">
    <property type="entry name" value="Ribosomal protein L13"/>
    <property type="match status" value="1"/>
</dbReference>
<dbReference type="HAMAP" id="MF_01366">
    <property type="entry name" value="Ribosomal_uL13"/>
    <property type="match status" value="1"/>
</dbReference>
<dbReference type="InterPro" id="IPR005822">
    <property type="entry name" value="Ribosomal_uL13"/>
</dbReference>
<dbReference type="InterPro" id="IPR005823">
    <property type="entry name" value="Ribosomal_uL13_bac-type"/>
</dbReference>
<dbReference type="InterPro" id="IPR023563">
    <property type="entry name" value="Ribosomal_uL13_CS"/>
</dbReference>
<dbReference type="InterPro" id="IPR036899">
    <property type="entry name" value="Ribosomal_uL13_sf"/>
</dbReference>
<dbReference type="NCBIfam" id="TIGR01066">
    <property type="entry name" value="rplM_bact"/>
    <property type="match status" value="1"/>
</dbReference>
<dbReference type="PANTHER" id="PTHR11545:SF2">
    <property type="entry name" value="LARGE RIBOSOMAL SUBUNIT PROTEIN UL13M"/>
    <property type="match status" value="1"/>
</dbReference>
<dbReference type="PANTHER" id="PTHR11545">
    <property type="entry name" value="RIBOSOMAL PROTEIN L13"/>
    <property type="match status" value="1"/>
</dbReference>
<dbReference type="Pfam" id="PF00572">
    <property type="entry name" value="Ribosomal_L13"/>
    <property type="match status" value="1"/>
</dbReference>
<dbReference type="PIRSF" id="PIRSF002181">
    <property type="entry name" value="Ribosomal_L13"/>
    <property type="match status" value="1"/>
</dbReference>
<dbReference type="SUPFAM" id="SSF52161">
    <property type="entry name" value="Ribosomal protein L13"/>
    <property type="match status" value="1"/>
</dbReference>
<dbReference type="PROSITE" id="PS00783">
    <property type="entry name" value="RIBOSOMAL_L13"/>
    <property type="match status" value="1"/>
</dbReference>
<gene>
    <name evidence="1" type="primary">rplM</name>
    <name type="ordered locus">NTHI1687</name>
</gene>
<evidence type="ECO:0000255" key="1">
    <source>
        <dbReference type="HAMAP-Rule" id="MF_01366"/>
    </source>
</evidence>
<evidence type="ECO:0000305" key="2"/>
<feature type="chain" id="PRO_0000261732" description="Large ribosomal subunit protein uL13">
    <location>
        <begin position="1"/>
        <end position="142"/>
    </location>
</feature>
<name>RL13_HAEI8</name>